<name>LDHA_MONDO</name>
<protein>
    <recommendedName>
        <fullName>L-lactate dehydrogenase A chain</fullName>
        <shortName>LDH-A</shortName>
        <ecNumber evidence="2">1.1.1.27</ecNumber>
    </recommendedName>
    <alternativeName>
        <fullName>LDH muscle subunit</fullName>
        <shortName>LDH-M</shortName>
    </alternativeName>
</protein>
<keyword id="KW-0007">Acetylation</keyword>
<keyword id="KW-0963">Cytoplasm</keyword>
<keyword id="KW-1017">Isopeptide bond</keyword>
<keyword id="KW-0520">NAD</keyword>
<keyword id="KW-0560">Oxidoreductase</keyword>
<keyword id="KW-0597">Phosphoprotein</keyword>
<keyword id="KW-1185">Reference proteome</keyword>
<keyword id="KW-0832">Ubl conjugation</keyword>
<proteinExistence type="evidence at transcript level"/>
<dbReference type="EC" id="1.1.1.27" evidence="2"/>
<dbReference type="EMBL" id="AF070996">
    <property type="protein sequence ID" value="AAD40733.1"/>
    <property type="molecule type" value="mRNA"/>
</dbReference>
<dbReference type="RefSeq" id="NP_001028147.1">
    <property type="nucleotide sequence ID" value="NM_001032975.1"/>
</dbReference>
<dbReference type="RefSeq" id="XP_003339625.1">
    <property type="nucleotide sequence ID" value="XM_003339577.3"/>
</dbReference>
<dbReference type="SMR" id="Q9XT87"/>
<dbReference type="FunCoup" id="Q9XT87">
    <property type="interactions" value="521"/>
</dbReference>
<dbReference type="STRING" id="13616.ENSMODP00000008092"/>
<dbReference type="Ensembl" id="ENSMODT00000008256.3">
    <property type="protein sequence ID" value="ENSMODP00000008092.1"/>
    <property type="gene ID" value="ENSMODG00000006522.3"/>
</dbReference>
<dbReference type="GeneID" id="503513"/>
<dbReference type="KEGG" id="mdo:100012604"/>
<dbReference type="KEGG" id="mdo:503513"/>
<dbReference type="CTD" id="3939"/>
<dbReference type="eggNOG" id="KOG1495">
    <property type="taxonomic scope" value="Eukaryota"/>
</dbReference>
<dbReference type="GeneTree" id="ENSGT00940000153201"/>
<dbReference type="HOGENOM" id="CLU_045401_0_2_1"/>
<dbReference type="InParanoid" id="Q9XT87"/>
<dbReference type="OrthoDB" id="9438721at2759"/>
<dbReference type="TreeFam" id="TF314963"/>
<dbReference type="UniPathway" id="UPA00554">
    <property type="reaction ID" value="UER00611"/>
</dbReference>
<dbReference type="Proteomes" id="UP000002280">
    <property type="component" value="Chromosome 5"/>
</dbReference>
<dbReference type="Bgee" id="ENSMODG00000006522">
    <property type="expression patterns" value="Expressed in extraembryonic membrane and 19 other cell types or tissues"/>
</dbReference>
<dbReference type="GO" id="GO:0005739">
    <property type="term" value="C:mitochondrion"/>
    <property type="evidence" value="ECO:0000318"/>
    <property type="project" value="GO_Central"/>
</dbReference>
<dbReference type="GO" id="GO:0004459">
    <property type="term" value="F:L-lactate dehydrogenase activity"/>
    <property type="evidence" value="ECO:0000318"/>
    <property type="project" value="GO_Central"/>
</dbReference>
<dbReference type="GO" id="GO:0006089">
    <property type="term" value="P:lactate metabolic process"/>
    <property type="evidence" value="ECO:0000318"/>
    <property type="project" value="GO_Central"/>
</dbReference>
<dbReference type="GO" id="GO:0006090">
    <property type="term" value="P:pyruvate metabolic process"/>
    <property type="evidence" value="ECO:0000318"/>
    <property type="project" value="GO_Central"/>
</dbReference>
<dbReference type="CDD" id="cd05293">
    <property type="entry name" value="LDH_1"/>
    <property type="match status" value="1"/>
</dbReference>
<dbReference type="FunFam" id="3.40.50.720:FF:000029">
    <property type="entry name" value="L-lactate dehydrogenase A chain"/>
    <property type="match status" value="1"/>
</dbReference>
<dbReference type="FunFam" id="3.90.110.10:FF:000003">
    <property type="entry name" value="L-lactate dehydrogenase A chain"/>
    <property type="match status" value="1"/>
</dbReference>
<dbReference type="Gene3D" id="3.90.110.10">
    <property type="entry name" value="Lactate dehydrogenase/glycoside hydrolase, family 4, C-terminal"/>
    <property type="match status" value="1"/>
</dbReference>
<dbReference type="Gene3D" id="3.40.50.720">
    <property type="entry name" value="NAD(P)-binding Rossmann-like Domain"/>
    <property type="match status" value="1"/>
</dbReference>
<dbReference type="HAMAP" id="MF_00488">
    <property type="entry name" value="Lactate_dehydrog"/>
    <property type="match status" value="1"/>
</dbReference>
<dbReference type="InterPro" id="IPR001557">
    <property type="entry name" value="L-lactate/malate_DH"/>
</dbReference>
<dbReference type="InterPro" id="IPR011304">
    <property type="entry name" value="L-lactate_DH"/>
</dbReference>
<dbReference type="InterPro" id="IPR018177">
    <property type="entry name" value="L-lactate_DH_AS"/>
</dbReference>
<dbReference type="InterPro" id="IPR022383">
    <property type="entry name" value="Lactate/malate_DH_C"/>
</dbReference>
<dbReference type="InterPro" id="IPR001236">
    <property type="entry name" value="Lactate/malate_DH_N"/>
</dbReference>
<dbReference type="InterPro" id="IPR015955">
    <property type="entry name" value="Lactate_DH/Glyco_Ohase_4_C"/>
</dbReference>
<dbReference type="InterPro" id="IPR036291">
    <property type="entry name" value="NAD(P)-bd_dom_sf"/>
</dbReference>
<dbReference type="NCBIfam" id="TIGR01771">
    <property type="entry name" value="L-LDH-NAD"/>
    <property type="match status" value="1"/>
</dbReference>
<dbReference type="NCBIfam" id="NF000824">
    <property type="entry name" value="PRK00066.1"/>
    <property type="match status" value="1"/>
</dbReference>
<dbReference type="NCBIfam" id="NF004863">
    <property type="entry name" value="PRK06223.1"/>
    <property type="match status" value="1"/>
</dbReference>
<dbReference type="PANTHER" id="PTHR43128">
    <property type="entry name" value="L-2-HYDROXYCARBOXYLATE DEHYDROGENASE (NAD(P)(+))"/>
    <property type="match status" value="1"/>
</dbReference>
<dbReference type="PANTHER" id="PTHR43128:SF10">
    <property type="entry name" value="L-LACTATE DEHYDROGENASE A CHAIN"/>
    <property type="match status" value="1"/>
</dbReference>
<dbReference type="Pfam" id="PF02866">
    <property type="entry name" value="Ldh_1_C"/>
    <property type="match status" value="1"/>
</dbReference>
<dbReference type="Pfam" id="PF00056">
    <property type="entry name" value="Ldh_1_N"/>
    <property type="match status" value="1"/>
</dbReference>
<dbReference type="PIRSF" id="PIRSF000102">
    <property type="entry name" value="Lac_mal_DH"/>
    <property type="match status" value="1"/>
</dbReference>
<dbReference type="PRINTS" id="PR00086">
    <property type="entry name" value="LLDHDRGNASE"/>
</dbReference>
<dbReference type="SUPFAM" id="SSF56327">
    <property type="entry name" value="LDH C-terminal domain-like"/>
    <property type="match status" value="1"/>
</dbReference>
<dbReference type="SUPFAM" id="SSF51735">
    <property type="entry name" value="NAD(P)-binding Rossmann-fold domains"/>
    <property type="match status" value="1"/>
</dbReference>
<dbReference type="PROSITE" id="PS00064">
    <property type="entry name" value="L_LDH"/>
    <property type="match status" value="1"/>
</dbReference>
<reference key="1">
    <citation type="submission" date="1998-06" db="EMBL/GenBank/DDBJ databases">
        <title>Molecular evolution of vertebrate lactate dehydrogenase isozymes by gene duplication.</title>
        <authorList>
            <person name="Tsoi S.C.-M."/>
            <person name="Li J.Y."/>
            <person name="Mannen H."/>
            <person name="Li S.S.-L."/>
        </authorList>
    </citation>
    <scope>NUCLEOTIDE SEQUENCE [MRNA]</scope>
</reference>
<sequence length="332" mass="36358">MGTVKDQLILNVLKEEQTPHNKITVVGVGAVGMACAISILMKDLADELALVDVIEDKLKGEMMDLQHGSLFLKTPKIVSSKDYAVTANSKLVVITAGARQQEGESRLNLVQRNVNIFKFIIPNIVKYSPNCKLLVVSNPVDILTYVAWKLSGFPKNRVIGSGCNLDSARFRYLMGEKLGIHSSSCHGWILGEHGDSSVPVWSGVNVAGVSLKSLHPALGTDSDSEQWKDVHKQVVESAYEVIKLKGYTSWAIGLSVADLAESIMKNLRRVHPISTMIKGLYGINEDVFLSVPCILGQNGISDVVKVTLTTEEESRLKQSADTLWGIQKELQF</sequence>
<feature type="chain" id="PRO_0000168413" description="L-lactate dehydrogenase A chain">
    <location>
        <begin position="1"/>
        <end position="332"/>
    </location>
</feature>
<feature type="active site" description="Proton acceptor" evidence="1">
    <location>
        <position position="193"/>
    </location>
</feature>
<feature type="binding site" evidence="1">
    <location>
        <begin position="29"/>
        <end position="57"/>
    </location>
    <ligand>
        <name>NAD(+)</name>
        <dbReference type="ChEBI" id="CHEBI:57540"/>
    </ligand>
</feature>
<feature type="binding site" evidence="1">
    <location>
        <position position="99"/>
    </location>
    <ligand>
        <name>NAD(+)</name>
        <dbReference type="ChEBI" id="CHEBI:57540"/>
    </ligand>
</feature>
<feature type="binding site" evidence="1">
    <location>
        <position position="106"/>
    </location>
    <ligand>
        <name>substrate</name>
    </ligand>
</feature>
<feature type="binding site" evidence="1">
    <location>
        <position position="138"/>
    </location>
    <ligand>
        <name>NAD(+)</name>
        <dbReference type="ChEBI" id="CHEBI:57540"/>
    </ligand>
</feature>
<feature type="binding site" evidence="1">
    <location>
        <position position="138"/>
    </location>
    <ligand>
        <name>substrate</name>
    </ligand>
</feature>
<feature type="binding site" evidence="1">
    <location>
        <position position="169"/>
    </location>
    <ligand>
        <name>substrate</name>
    </ligand>
</feature>
<feature type="binding site" evidence="1">
    <location>
        <position position="248"/>
    </location>
    <ligand>
        <name>substrate</name>
    </ligand>
</feature>
<feature type="modified residue" description="N6-acetyllysine; alternate" evidence="2">
    <location>
        <position position="5"/>
    </location>
</feature>
<feature type="modified residue" description="N6-succinyllysine; alternate" evidence="4">
    <location>
        <position position="5"/>
    </location>
</feature>
<feature type="modified residue" description="N6-acetyllysine" evidence="2">
    <location>
        <position position="14"/>
    </location>
</feature>
<feature type="modified residue" description="Phosphothreonine" evidence="2">
    <location>
        <position position="18"/>
    </location>
</feature>
<feature type="modified residue" description="N6-acetyllysine; alternate" evidence="2">
    <location>
        <position position="57"/>
    </location>
</feature>
<feature type="modified residue" description="N6-acetyllysine" evidence="2">
    <location>
        <position position="81"/>
    </location>
</feature>
<feature type="modified residue" description="N6-acetyllysine; alternate" evidence="2">
    <location>
        <position position="118"/>
    </location>
</feature>
<feature type="modified residue" description="N6-succinyllysine; alternate" evidence="4">
    <location>
        <position position="118"/>
    </location>
</feature>
<feature type="modified residue" description="N6-acetyllysine" evidence="2">
    <location>
        <position position="126"/>
    </location>
</feature>
<feature type="modified residue" description="N6-acetyllysine" evidence="4">
    <location>
        <position position="232"/>
    </location>
</feature>
<feature type="modified residue" description="Phosphotyrosine" evidence="4">
    <location>
        <position position="239"/>
    </location>
</feature>
<feature type="modified residue" description="N6-acetyllysine" evidence="4">
    <location>
        <position position="243"/>
    </location>
</feature>
<feature type="modified residue" description="Phosphothreonine" evidence="3">
    <location>
        <position position="309"/>
    </location>
</feature>
<feature type="modified residue" description="Phosphothreonine" evidence="3">
    <location>
        <position position="322"/>
    </location>
</feature>
<feature type="cross-link" description="Glycyl lysine isopeptide (Lys-Gly) (interchain with G-Cter in SUMO2); alternate" evidence="2">
    <location>
        <position position="57"/>
    </location>
</feature>
<evidence type="ECO:0000250" key="1"/>
<evidence type="ECO:0000250" key="2">
    <source>
        <dbReference type="UniProtKB" id="P00338"/>
    </source>
</evidence>
<evidence type="ECO:0000250" key="3">
    <source>
        <dbReference type="UniProtKB" id="P04642"/>
    </source>
</evidence>
<evidence type="ECO:0000250" key="4">
    <source>
        <dbReference type="UniProtKB" id="P06151"/>
    </source>
</evidence>
<evidence type="ECO:0000305" key="5"/>
<comment type="function">
    <text evidence="2">Interconverts simultaneously and stereospecifically pyruvate and lactate with concomitant interconversion of NADH and NAD(+).</text>
</comment>
<comment type="catalytic activity">
    <reaction evidence="2">
        <text>(S)-lactate + NAD(+) = pyruvate + NADH + H(+)</text>
        <dbReference type="Rhea" id="RHEA:23444"/>
        <dbReference type="ChEBI" id="CHEBI:15361"/>
        <dbReference type="ChEBI" id="CHEBI:15378"/>
        <dbReference type="ChEBI" id="CHEBI:16651"/>
        <dbReference type="ChEBI" id="CHEBI:57540"/>
        <dbReference type="ChEBI" id="CHEBI:57945"/>
        <dbReference type="EC" id="1.1.1.27"/>
    </reaction>
    <physiologicalReaction direction="left-to-right" evidence="2">
        <dbReference type="Rhea" id="RHEA:23445"/>
    </physiologicalReaction>
    <physiologicalReaction direction="right-to-left" evidence="2">
        <dbReference type="Rhea" id="RHEA:23446"/>
    </physiologicalReaction>
</comment>
<comment type="pathway">
    <text evidence="2">Fermentation; pyruvate fermentation to lactate; (S)-lactate from pyruvate: step 1/1.</text>
</comment>
<comment type="subunit">
    <text evidence="2">Homotetramer. Interacts with PTEN upstream reading frame protein MP31.</text>
</comment>
<comment type="subcellular location">
    <subcellularLocation>
        <location evidence="1">Cytoplasm</location>
    </subcellularLocation>
</comment>
<comment type="PTM">
    <text evidence="2">ISGylated.</text>
</comment>
<comment type="similarity">
    <text evidence="5">Belongs to the LDH/MDH superfamily. LDH family.</text>
</comment>
<organism>
    <name type="scientific">Monodelphis domestica</name>
    <name type="common">Gray short-tailed opossum</name>
    <dbReference type="NCBI Taxonomy" id="13616"/>
    <lineage>
        <taxon>Eukaryota</taxon>
        <taxon>Metazoa</taxon>
        <taxon>Chordata</taxon>
        <taxon>Craniata</taxon>
        <taxon>Vertebrata</taxon>
        <taxon>Euteleostomi</taxon>
        <taxon>Mammalia</taxon>
        <taxon>Metatheria</taxon>
        <taxon>Didelphimorphia</taxon>
        <taxon>Didelphidae</taxon>
        <taxon>Monodelphis</taxon>
    </lineage>
</organism>
<accession>Q9XT87</accession>
<gene>
    <name type="primary">LDHA</name>
</gene>